<evidence type="ECO:0000250" key="1"/>
<evidence type="ECO:0000255" key="2">
    <source>
        <dbReference type="HAMAP-Rule" id="MF_01057"/>
    </source>
</evidence>
<name>TRMB_NEOSM</name>
<reference key="1">
    <citation type="journal article" date="2006" name="PLoS Genet.">
        <title>Comparative genomics of emerging human ehrlichiosis agents.</title>
        <authorList>
            <person name="Dunning Hotopp J.C."/>
            <person name="Lin M."/>
            <person name="Madupu R."/>
            <person name="Crabtree J."/>
            <person name="Angiuoli S.V."/>
            <person name="Eisen J.A."/>
            <person name="Seshadri R."/>
            <person name="Ren Q."/>
            <person name="Wu M."/>
            <person name="Utterback T.R."/>
            <person name="Smith S."/>
            <person name="Lewis M."/>
            <person name="Khouri H."/>
            <person name="Zhang C."/>
            <person name="Niu H."/>
            <person name="Lin Q."/>
            <person name="Ohashi N."/>
            <person name="Zhi N."/>
            <person name="Nelson W.C."/>
            <person name="Brinkac L.M."/>
            <person name="Dodson R.J."/>
            <person name="Rosovitz M.J."/>
            <person name="Sundaram J.P."/>
            <person name="Daugherty S.C."/>
            <person name="Davidsen T."/>
            <person name="Durkin A.S."/>
            <person name="Gwinn M.L."/>
            <person name="Haft D.H."/>
            <person name="Selengut J.D."/>
            <person name="Sullivan S.A."/>
            <person name="Zafar N."/>
            <person name="Zhou L."/>
            <person name="Benahmed F."/>
            <person name="Forberger H."/>
            <person name="Halpin R."/>
            <person name="Mulligan S."/>
            <person name="Robinson J."/>
            <person name="White O."/>
            <person name="Rikihisa Y."/>
            <person name="Tettelin H."/>
        </authorList>
    </citation>
    <scope>NUCLEOTIDE SEQUENCE [LARGE SCALE GENOMIC DNA]</scope>
    <source>
        <strain>ATCC VR-367 / Miyayama</strain>
    </source>
</reference>
<feature type="chain" id="PRO_0000288188" description="tRNA (guanine-N(7)-)-methyltransferase">
    <location>
        <begin position="1"/>
        <end position="217"/>
    </location>
</feature>
<feature type="active site" evidence="1">
    <location>
        <position position="130"/>
    </location>
</feature>
<feature type="binding site" evidence="2">
    <location>
        <position position="56"/>
    </location>
    <ligand>
        <name>S-adenosyl-L-methionine</name>
        <dbReference type="ChEBI" id="CHEBI:59789"/>
    </ligand>
</feature>
<feature type="binding site" evidence="2">
    <location>
        <position position="81"/>
    </location>
    <ligand>
        <name>S-adenosyl-L-methionine</name>
        <dbReference type="ChEBI" id="CHEBI:59789"/>
    </ligand>
</feature>
<feature type="binding site" evidence="2">
    <location>
        <position position="108"/>
    </location>
    <ligand>
        <name>S-adenosyl-L-methionine</name>
        <dbReference type="ChEBI" id="CHEBI:59789"/>
    </ligand>
</feature>
<feature type="binding site" evidence="2">
    <location>
        <position position="130"/>
    </location>
    <ligand>
        <name>S-adenosyl-L-methionine</name>
        <dbReference type="ChEBI" id="CHEBI:59789"/>
    </ligand>
</feature>
<feature type="binding site" evidence="2">
    <location>
        <position position="134"/>
    </location>
    <ligand>
        <name>substrate</name>
    </ligand>
</feature>
<feature type="binding site" evidence="2">
    <location>
        <position position="166"/>
    </location>
    <ligand>
        <name>substrate</name>
    </ligand>
</feature>
<keyword id="KW-0489">Methyltransferase</keyword>
<keyword id="KW-0949">S-adenosyl-L-methionine</keyword>
<keyword id="KW-0808">Transferase</keyword>
<keyword id="KW-0819">tRNA processing</keyword>
<proteinExistence type="inferred from homology"/>
<sequence>MFVHNEVNLRLEKKQFLRSYGRRRGRNFRENKLVGLERFLASHEKLENLKSEIVLEVGFGFGEHILKKAIDYPDKVFVGAEVYVNGIARLLEQVELHELSNVLIWNDDVRLLLEKLLCKVFHKVYILFPDPWPKRRHHKRRIVDVPFFQLLSRSLHPLAEVVVATDDHDYAQQIYQSALEVFSKVENTEIPKNASRFASKASNRIFGYKMVYDATDA</sequence>
<protein>
    <recommendedName>
        <fullName evidence="2">tRNA (guanine-N(7)-)-methyltransferase</fullName>
        <ecNumber evidence="2">2.1.1.33</ecNumber>
    </recommendedName>
    <alternativeName>
        <fullName evidence="2">tRNA (guanine(46)-N(7))-methyltransferase</fullName>
    </alternativeName>
    <alternativeName>
        <fullName evidence="2">tRNA(m7G46)-methyltransferase</fullName>
    </alternativeName>
</protein>
<organism>
    <name type="scientific">Neorickettsia sennetsu (strain ATCC VR-367 / Miyayama)</name>
    <name type="common">Ehrlichia sennetsu</name>
    <dbReference type="NCBI Taxonomy" id="222891"/>
    <lineage>
        <taxon>Bacteria</taxon>
        <taxon>Pseudomonadati</taxon>
        <taxon>Pseudomonadota</taxon>
        <taxon>Alphaproteobacteria</taxon>
        <taxon>Rickettsiales</taxon>
        <taxon>Anaplasmataceae</taxon>
        <taxon>Neorickettsia</taxon>
    </lineage>
</organism>
<dbReference type="EC" id="2.1.1.33" evidence="2"/>
<dbReference type="EMBL" id="CP000237">
    <property type="protein sequence ID" value="ABD46256.1"/>
    <property type="molecule type" value="Genomic_DNA"/>
</dbReference>
<dbReference type="RefSeq" id="WP_011452292.1">
    <property type="nucleotide sequence ID" value="NC_007798.1"/>
</dbReference>
<dbReference type="SMR" id="Q2GCL0"/>
<dbReference type="STRING" id="222891.NSE_0922"/>
<dbReference type="KEGG" id="nse:NSE_0922"/>
<dbReference type="eggNOG" id="COG0220">
    <property type="taxonomic scope" value="Bacteria"/>
</dbReference>
<dbReference type="HOGENOM" id="CLU_050910_0_3_5"/>
<dbReference type="OrthoDB" id="9802090at2"/>
<dbReference type="UniPathway" id="UPA00989"/>
<dbReference type="Proteomes" id="UP000001942">
    <property type="component" value="Chromosome"/>
</dbReference>
<dbReference type="GO" id="GO:0043527">
    <property type="term" value="C:tRNA methyltransferase complex"/>
    <property type="evidence" value="ECO:0007669"/>
    <property type="project" value="TreeGrafter"/>
</dbReference>
<dbReference type="GO" id="GO:0008176">
    <property type="term" value="F:tRNA (guanine(46)-N7)-methyltransferase activity"/>
    <property type="evidence" value="ECO:0007669"/>
    <property type="project" value="UniProtKB-UniRule"/>
</dbReference>
<dbReference type="Gene3D" id="3.40.50.150">
    <property type="entry name" value="Vaccinia Virus protein VP39"/>
    <property type="match status" value="1"/>
</dbReference>
<dbReference type="HAMAP" id="MF_01057">
    <property type="entry name" value="tRNA_methyltr_TrmB"/>
    <property type="match status" value="1"/>
</dbReference>
<dbReference type="InterPro" id="IPR029063">
    <property type="entry name" value="SAM-dependent_MTases_sf"/>
</dbReference>
<dbReference type="InterPro" id="IPR003358">
    <property type="entry name" value="tRNA_(Gua-N-7)_MeTrfase_Trmb"/>
</dbReference>
<dbReference type="InterPro" id="IPR055361">
    <property type="entry name" value="tRNA_methyltr_TrmB_bact"/>
</dbReference>
<dbReference type="NCBIfam" id="TIGR00091">
    <property type="entry name" value="tRNA (guanosine(46)-N7)-methyltransferase TrmB"/>
    <property type="match status" value="1"/>
</dbReference>
<dbReference type="PANTHER" id="PTHR23417">
    <property type="entry name" value="3-DEOXY-D-MANNO-OCTULOSONIC-ACID TRANSFERASE/TRNA GUANINE-N 7 - -METHYLTRANSFERASE"/>
    <property type="match status" value="1"/>
</dbReference>
<dbReference type="PANTHER" id="PTHR23417:SF14">
    <property type="entry name" value="PENTACOTRIPEPTIDE-REPEAT REGION OF PRORP DOMAIN-CONTAINING PROTEIN"/>
    <property type="match status" value="1"/>
</dbReference>
<dbReference type="Pfam" id="PF02390">
    <property type="entry name" value="Methyltransf_4"/>
    <property type="match status" value="1"/>
</dbReference>
<dbReference type="SUPFAM" id="SSF53335">
    <property type="entry name" value="S-adenosyl-L-methionine-dependent methyltransferases"/>
    <property type="match status" value="1"/>
</dbReference>
<dbReference type="PROSITE" id="PS51625">
    <property type="entry name" value="SAM_MT_TRMB"/>
    <property type="match status" value="1"/>
</dbReference>
<gene>
    <name evidence="2" type="primary">trmB</name>
    <name type="ordered locus">NSE_0922</name>
</gene>
<comment type="function">
    <text evidence="2">Catalyzes the formation of N(7)-methylguanine at position 46 (m7G46) in tRNA.</text>
</comment>
<comment type="catalytic activity">
    <reaction evidence="2">
        <text>guanosine(46) in tRNA + S-adenosyl-L-methionine = N(7)-methylguanosine(46) in tRNA + S-adenosyl-L-homocysteine</text>
        <dbReference type="Rhea" id="RHEA:42708"/>
        <dbReference type="Rhea" id="RHEA-COMP:10188"/>
        <dbReference type="Rhea" id="RHEA-COMP:10189"/>
        <dbReference type="ChEBI" id="CHEBI:57856"/>
        <dbReference type="ChEBI" id="CHEBI:59789"/>
        <dbReference type="ChEBI" id="CHEBI:74269"/>
        <dbReference type="ChEBI" id="CHEBI:74480"/>
        <dbReference type="EC" id="2.1.1.33"/>
    </reaction>
</comment>
<comment type="pathway">
    <text evidence="2">tRNA modification; N(7)-methylguanine-tRNA biosynthesis.</text>
</comment>
<comment type="similarity">
    <text evidence="2">Belongs to the class I-like SAM-binding methyltransferase superfamily. TrmB family.</text>
</comment>
<accession>Q2GCL0</accession>